<reference key="1">
    <citation type="journal article" date="2002" name="Lancet">
        <title>Genome and virulence determinants of high virulence community-acquired MRSA.</title>
        <authorList>
            <person name="Baba T."/>
            <person name="Takeuchi F."/>
            <person name="Kuroda M."/>
            <person name="Yuzawa H."/>
            <person name="Aoki K."/>
            <person name="Oguchi A."/>
            <person name="Nagai Y."/>
            <person name="Iwama N."/>
            <person name="Asano K."/>
            <person name="Naimi T."/>
            <person name="Kuroda H."/>
            <person name="Cui L."/>
            <person name="Yamamoto K."/>
            <person name="Hiramatsu K."/>
        </authorList>
    </citation>
    <scope>NUCLEOTIDE SEQUENCE [LARGE SCALE GENOMIC DNA]</scope>
    <source>
        <strain>MW2</strain>
    </source>
</reference>
<gene>
    <name evidence="1" type="primary">mqo1</name>
    <name type="ordered locus">MW2286</name>
</gene>
<sequence length="492" mass="54786">MTTQHSKTDVILIGGGIMSATLGTLLKELSPEKNIKVFEKLAQPGEESSNVWNNAGTGHSALCELNYTKEGKDGTVDCSKAIKINEQYQISKQFWAYLVKTGQLDNPDRFIQAVPHMSFVIGEDNVAFIKSRVATLKKSVLFEKMKLSQDEEEMKSWVPLMIEGRKSDEPIALTYDETGTDVNFGALTAKLFENLEQRGVGIQYKQNVLDIKKQKSGAWLVKVKDLETNETTTYESDFVFIGAGGASLPLLQKTGIKQSKHIGGFPVSGLFLRCTNQEVIDRHHAKVYGKAAVGAPPMSVPHLDTRFVDGKRSLLFGPFAGFSPKFLKTGSHMDLIKSVKPNNIVTMLSAGIKEMSLTKYLVSQLMLSNDERMDDLRVFFPNAKNEDWEVITAGQRVQVIKDTEDSKGNLQFGTEVITSDDGTLAALLGASPGASTAVDIMFDVLQRCYRDEFKGWEPKIKEMVPSFGYRLTDHEDLYHKINEEVTKYLQVK</sequence>
<protein>
    <recommendedName>
        <fullName evidence="1">Probable malate:quinone oxidoreductase 1</fullName>
        <ecNumber evidence="1">1.1.5.4</ecNumber>
    </recommendedName>
    <alternativeName>
        <fullName evidence="1">MQO 1</fullName>
    </alternativeName>
    <alternativeName>
        <fullName evidence="1">Malate dehydrogenase [quinone] 1</fullName>
    </alternativeName>
</protein>
<keyword id="KW-0274">FAD</keyword>
<keyword id="KW-0285">Flavoprotein</keyword>
<keyword id="KW-0560">Oxidoreductase</keyword>
<keyword id="KW-0816">Tricarboxylic acid cycle</keyword>
<organism>
    <name type="scientific">Staphylococcus aureus (strain MW2)</name>
    <dbReference type="NCBI Taxonomy" id="196620"/>
    <lineage>
        <taxon>Bacteria</taxon>
        <taxon>Bacillati</taxon>
        <taxon>Bacillota</taxon>
        <taxon>Bacilli</taxon>
        <taxon>Bacillales</taxon>
        <taxon>Staphylococcaceae</taxon>
        <taxon>Staphylococcus</taxon>
    </lineage>
</organism>
<accession>P65423</accession>
<accession>Q99RR2</accession>
<proteinExistence type="inferred from homology"/>
<feature type="chain" id="PRO_0000128747" description="Probable malate:quinone oxidoreductase 1">
    <location>
        <begin position="1"/>
        <end position="492"/>
    </location>
</feature>
<evidence type="ECO:0000255" key="1">
    <source>
        <dbReference type="HAMAP-Rule" id="MF_00212"/>
    </source>
</evidence>
<evidence type="ECO:0000305" key="2"/>
<name>MQO1_STAAW</name>
<comment type="catalytic activity">
    <reaction evidence="1">
        <text>(S)-malate + a quinone = a quinol + oxaloacetate</text>
        <dbReference type="Rhea" id="RHEA:46012"/>
        <dbReference type="ChEBI" id="CHEBI:15589"/>
        <dbReference type="ChEBI" id="CHEBI:16452"/>
        <dbReference type="ChEBI" id="CHEBI:24646"/>
        <dbReference type="ChEBI" id="CHEBI:132124"/>
        <dbReference type="EC" id="1.1.5.4"/>
    </reaction>
</comment>
<comment type="cofactor">
    <cofactor evidence="1">
        <name>FAD</name>
        <dbReference type="ChEBI" id="CHEBI:57692"/>
    </cofactor>
</comment>
<comment type="pathway">
    <text evidence="1">Carbohydrate metabolism; tricarboxylic acid cycle; oxaloacetate from (S)-malate (quinone route): step 1/1.</text>
</comment>
<comment type="similarity">
    <text evidence="1">Belongs to the MQO family.</text>
</comment>
<comment type="sequence caution" evidence="2">
    <conflict type="erroneous initiation">
        <sequence resource="EMBL-CDS" id="BAB96151"/>
    </conflict>
</comment>
<dbReference type="EC" id="1.1.5.4" evidence="1"/>
<dbReference type="EMBL" id="BA000033">
    <property type="protein sequence ID" value="BAB96151.1"/>
    <property type="status" value="ALT_INIT"/>
    <property type="molecule type" value="Genomic_DNA"/>
</dbReference>
<dbReference type="SMR" id="P65423"/>
<dbReference type="KEGG" id="sam:MW2286"/>
<dbReference type="HOGENOM" id="CLU_028151_0_0_9"/>
<dbReference type="UniPathway" id="UPA00223">
    <property type="reaction ID" value="UER01008"/>
</dbReference>
<dbReference type="GO" id="GO:0047545">
    <property type="term" value="F:2-hydroxyglutarate dehydrogenase activity"/>
    <property type="evidence" value="ECO:0007669"/>
    <property type="project" value="TreeGrafter"/>
</dbReference>
<dbReference type="GO" id="GO:0008924">
    <property type="term" value="F:L-malate dehydrogenase (quinone) activity"/>
    <property type="evidence" value="ECO:0007669"/>
    <property type="project" value="UniProtKB-UniRule"/>
</dbReference>
<dbReference type="GO" id="GO:0006099">
    <property type="term" value="P:tricarboxylic acid cycle"/>
    <property type="evidence" value="ECO:0007669"/>
    <property type="project" value="UniProtKB-UniRule"/>
</dbReference>
<dbReference type="Gene3D" id="3.30.9.10">
    <property type="entry name" value="D-Amino Acid Oxidase, subunit A, domain 2"/>
    <property type="match status" value="1"/>
</dbReference>
<dbReference type="Gene3D" id="3.50.50.60">
    <property type="entry name" value="FAD/NAD(P)-binding domain"/>
    <property type="match status" value="1"/>
</dbReference>
<dbReference type="HAMAP" id="MF_00212">
    <property type="entry name" value="MQO"/>
    <property type="match status" value="1"/>
</dbReference>
<dbReference type="InterPro" id="IPR036188">
    <property type="entry name" value="FAD/NAD-bd_sf"/>
</dbReference>
<dbReference type="InterPro" id="IPR006231">
    <property type="entry name" value="MQO"/>
</dbReference>
<dbReference type="NCBIfam" id="TIGR01320">
    <property type="entry name" value="mal_quin_oxido"/>
    <property type="match status" value="1"/>
</dbReference>
<dbReference type="NCBIfam" id="NF003603">
    <property type="entry name" value="PRK05257.1-1"/>
    <property type="match status" value="1"/>
</dbReference>
<dbReference type="NCBIfam" id="NF003604">
    <property type="entry name" value="PRK05257.1-3"/>
    <property type="match status" value="1"/>
</dbReference>
<dbReference type="NCBIfam" id="NF003605">
    <property type="entry name" value="PRK05257.1-4"/>
    <property type="match status" value="1"/>
</dbReference>
<dbReference type="NCBIfam" id="NF003606">
    <property type="entry name" value="PRK05257.2-1"/>
    <property type="match status" value="1"/>
</dbReference>
<dbReference type="NCBIfam" id="NF003611">
    <property type="entry name" value="PRK05257.3-2"/>
    <property type="match status" value="1"/>
</dbReference>
<dbReference type="NCBIfam" id="NF009875">
    <property type="entry name" value="PRK13339.1"/>
    <property type="match status" value="1"/>
</dbReference>
<dbReference type="PANTHER" id="PTHR43104">
    <property type="entry name" value="L-2-HYDROXYGLUTARATE DEHYDROGENASE, MITOCHONDRIAL"/>
    <property type="match status" value="1"/>
</dbReference>
<dbReference type="PANTHER" id="PTHR43104:SF2">
    <property type="entry name" value="L-2-HYDROXYGLUTARATE DEHYDROGENASE, MITOCHONDRIAL"/>
    <property type="match status" value="1"/>
</dbReference>
<dbReference type="Pfam" id="PF06039">
    <property type="entry name" value="Mqo"/>
    <property type="match status" value="1"/>
</dbReference>
<dbReference type="SUPFAM" id="SSF51905">
    <property type="entry name" value="FAD/NAD(P)-binding domain"/>
    <property type="match status" value="1"/>
</dbReference>